<sequence>MRNYNSFESITIRLASPERIKEWSFGEVKKPETINYRTLKPERDGLFCEKIFGTTKDWECYCGKFKSIRYKGVVCDKCGVEVTHSKVRRERMGHIELAAPVSHIWYYRSVPSRMGLLLDMTINQLKSVLYFEKYVIIDPADSGRNRGELIDEDEYHNYLDEYGDKFIAGIGGDAIKELLARIDVDAEARVIRQKIQDKNKISDKRIFKRLEVLEAFRDSGNRPEWMVLDVVPVIPPELRPMVQLEGGRFATSDLNDLYRRVINRNNRLKRLLALKAPEIIVRNEKRMLQEAVGALFDNSRRKRTVKGKGNRPLKSISDMLKGKQGRFRQNLLGKRVDYSGRSVIVVGPELKYHQMGLPKKMALELFKPFIMKRLVDLELAPNIKSAKKKIEAEDKEVFDVLETVVKEHPVLLNRAPTLHRLGIQAFLPVLVEGKAIKLHPLVCHAFNADFDGDQMAIHVPLAPKAQLETWMLMLSPHNILNPANGQPICGPTQDIVLGIYYLTSEVKDAKGEGKFFTGLEEVMYAIETKTVEIRSKISVLHEGKIIETTPGRLIFNQVMPKGYVYINRTLGDKETNKIIADVYEKFGPGITVVMLDEIKRLGYRYATVFAPTISIDDIRVSPQKEGLVNDANKEVEKADMEYRKGIITNEERRKKVIEIWTKTNDRITEGMFKELEKDQAGFNPVYVMAASGARGSKQQIRQLAGMRGLMAKPSGEIIELAIRSNFREGLGVLEFFISTHGARKGLADTALKTADAGYLTRRLVDISQDVIVSEDDCGTKANITLGIVKEGENVIVSLADRVFGRYTAEDLVDPVTEKVVFPKDTLITRALGQQIENLGYDKIKVRSPLTCRSRHGICTKCYGMDMARLVPAEIGEAVGTIAAQSIGQPGTQLTMRTFHVGGAASATIQEKEHKVPFRSLVKSINGRLVTNANGSKVFARRGTIIVNRLIQEFNTESLSSVRIVDGQRLEKGEVFASQVGESIEQRITSDQAGTVSLIGTTLRILGDDIVIPVKIGTILKSEEGQIVEENKALAEFDPYNEVAVSETAGTIVWEDLEIGKNVRRDVDPKTSNIILKVVEQKKDRLVPKVIVGSDGYSVPVDALLQFQNGDKVREGDVIFKIPSVAEKTRDITGGLPRVDELFEARRPKDACTLAEIDGKIEDKGEIVKEKRILYILPDSPEQEKVKVAIPIGKQIRVRQGDFVKRGDQLDEGNFDPHDILAIKGPSALHEYLVSEVQEVYRLQGVHINDKHIEVVVRSMLRKVIITDSGDTSFVNQQQVDKFLFDEENDRVEQEGGSPAQGTPVLLGLTKASLNTESYFSAASFQETTKVLTDAAIKGKTDNLMGLKENVIIGHMIPAGTGMKKYRDIEVFKEMPGDLDWDLDSEEEEEELSELSEAAPVSTATLSKLVAEEDEDEDELEEEADDSDDEDDDD</sequence>
<gene>
    <name evidence="1" type="primary">rpoC</name>
    <name type="ordered locus">LEPBI_I1971</name>
</gene>
<reference key="1">
    <citation type="journal article" date="2008" name="PLoS ONE">
        <title>Genome sequence of the saprophyte Leptospira biflexa provides insights into the evolution of Leptospira and the pathogenesis of leptospirosis.</title>
        <authorList>
            <person name="Picardeau M."/>
            <person name="Bulach D.M."/>
            <person name="Bouchier C."/>
            <person name="Zuerner R.L."/>
            <person name="Zidane N."/>
            <person name="Wilson P.J."/>
            <person name="Creno S."/>
            <person name="Kuczek E.S."/>
            <person name="Bommezzadri S."/>
            <person name="Davis J.C."/>
            <person name="McGrath A."/>
            <person name="Johnson M.J."/>
            <person name="Boursaux-Eude C."/>
            <person name="Seemann T."/>
            <person name="Rouy Z."/>
            <person name="Coppel R.L."/>
            <person name="Rood J.I."/>
            <person name="Lajus A."/>
            <person name="Davies J.K."/>
            <person name="Medigue C."/>
            <person name="Adler B."/>
        </authorList>
    </citation>
    <scope>NUCLEOTIDE SEQUENCE [LARGE SCALE GENOMIC DNA]</scope>
    <source>
        <strain>Patoc 1 / ATCC 23582 / Paris</strain>
    </source>
</reference>
<keyword id="KW-0240">DNA-directed RNA polymerase</keyword>
<keyword id="KW-0460">Magnesium</keyword>
<keyword id="KW-0479">Metal-binding</keyword>
<keyword id="KW-0548">Nucleotidyltransferase</keyword>
<keyword id="KW-1185">Reference proteome</keyword>
<keyword id="KW-0804">Transcription</keyword>
<keyword id="KW-0808">Transferase</keyword>
<keyword id="KW-0862">Zinc</keyword>
<proteinExistence type="inferred from homology"/>
<protein>
    <recommendedName>
        <fullName evidence="1">DNA-directed RNA polymerase subunit beta'</fullName>
        <shortName evidence="1">RNAP subunit beta'</shortName>
        <ecNumber evidence="1">2.7.7.6</ecNumber>
    </recommendedName>
    <alternativeName>
        <fullName evidence="1">RNA polymerase subunit beta'</fullName>
    </alternativeName>
    <alternativeName>
        <fullName evidence="1">Transcriptase subunit beta'</fullName>
    </alternativeName>
</protein>
<accession>B0SSI3</accession>
<comment type="function">
    <text evidence="1">DNA-dependent RNA polymerase catalyzes the transcription of DNA into RNA using the four ribonucleoside triphosphates as substrates.</text>
</comment>
<comment type="catalytic activity">
    <reaction evidence="1">
        <text>RNA(n) + a ribonucleoside 5'-triphosphate = RNA(n+1) + diphosphate</text>
        <dbReference type="Rhea" id="RHEA:21248"/>
        <dbReference type="Rhea" id="RHEA-COMP:14527"/>
        <dbReference type="Rhea" id="RHEA-COMP:17342"/>
        <dbReference type="ChEBI" id="CHEBI:33019"/>
        <dbReference type="ChEBI" id="CHEBI:61557"/>
        <dbReference type="ChEBI" id="CHEBI:140395"/>
        <dbReference type="EC" id="2.7.7.6"/>
    </reaction>
</comment>
<comment type="cofactor">
    <cofactor evidence="1">
        <name>Mg(2+)</name>
        <dbReference type="ChEBI" id="CHEBI:18420"/>
    </cofactor>
    <text evidence="1">Binds 1 Mg(2+) ion per subunit.</text>
</comment>
<comment type="cofactor">
    <cofactor evidence="1">
        <name>Zn(2+)</name>
        <dbReference type="ChEBI" id="CHEBI:29105"/>
    </cofactor>
    <text evidence="1">Binds 2 Zn(2+) ions per subunit.</text>
</comment>
<comment type="subunit">
    <text evidence="1">The RNAP catalytic core consists of 2 alpha, 1 beta, 1 beta' and 1 omega subunit. When a sigma factor is associated with the core the holoenzyme is formed, which can initiate transcription.</text>
</comment>
<comment type="similarity">
    <text evidence="1">Belongs to the RNA polymerase beta' chain family.</text>
</comment>
<feature type="chain" id="PRO_1000141778" description="DNA-directed RNA polymerase subunit beta'">
    <location>
        <begin position="1"/>
        <end position="1433"/>
    </location>
</feature>
<feature type="region of interest" description="Disordered" evidence="2">
    <location>
        <begin position="1383"/>
        <end position="1433"/>
    </location>
</feature>
<feature type="compositionally biased region" description="Acidic residues" evidence="2">
    <location>
        <begin position="1383"/>
        <end position="1393"/>
    </location>
</feature>
<feature type="compositionally biased region" description="Acidic residues" evidence="2">
    <location>
        <begin position="1411"/>
        <end position="1433"/>
    </location>
</feature>
<feature type="binding site" evidence="1">
    <location>
        <position position="60"/>
    </location>
    <ligand>
        <name>Zn(2+)</name>
        <dbReference type="ChEBI" id="CHEBI:29105"/>
        <label>1</label>
    </ligand>
</feature>
<feature type="binding site" evidence="1">
    <location>
        <position position="62"/>
    </location>
    <ligand>
        <name>Zn(2+)</name>
        <dbReference type="ChEBI" id="CHEBI:29105"/>
        <label>1</label>
    </ligand>
</feature>
<feature type="binding site" evidence="1">
    <location>
        <position position="75"/>
    </location>
    <ligand>
        <name>Zn(2+)</name>
        <dbReference type="ChEBI" id="CHEBI:29105"/>
        <label>1</label>
    </ligand>
</feature>
<feature type="binding site" evidence="1">
    <location>
        <position position="78"/>
    </location>
    <ligand>
        <name>Zn(2+)</name>
        <dbReference type="ChEBI" id="CHEBI:29105"/>
        <label>1</label>
    </ligand>
</feature>
<feature type="binding site" evidence="1">
    <location>
        <position position="449"/>
    </location>
    <ligand>
        <name>Mg(2+)</name>
        <dbReference type="ChEBI" id="CHEBI:18420"/>
    </ligand>
</feature>
<feature type="binding site" evidence="1">
    <location>
        <position position="451"/>
    </location>
    <ligand>
        <name>Mg(2+)</name>
        <dbReference type="ChEBI" id="CHEBI:18420"/>
    </ligand>
</feature>
<feature type="binding site" evidence="1">
    <location>
        <position position="453"/>
    </location>
    <ligand>
        <name>Mg(2+)</name>
        <dbReference type="ChEBI" id="CHEBI:18420"/>
    </ligand>
</feature>
<feature type="binding site" evidence="1">
    <location>
        <position position="777"/>
    </location>
    <ligand>
        <name>Zn(2+)</name>
        <dbReference type="ChEBI" id="CHEBI:29105"/>
        <label>2</label>
    </ligand>
</feature>
<feature type="binding site" evidence="1">
    <location>
        <position position="851"/>
    </location>
    <ligand>
        <name>Zn(2+)</name>
        <dbReference type="ChEBI" id="CHEBI:29105"/>
        <label>2</label>
    </ligand>
</feature>
<feature type="binding site" evidence="1">
    <location>
        <position position="858"/>
    </location>
    <ligand>
        <name>Zn(2+)</name>
        <dbReference type="ChEBI" id="CHEBI:29105"/>
        <label>2</label>
    </ligand>
</feature>
<feature type="binding site" evidence="1">
    <location>
        <position position="861"/>
    </location>
    <ligand>
        <name>Zn(2+)</name>
        <dbReference type="ChEBI" id="CHEBI:29105"/>
        <label>2</label>
    </ligand>
</feature>
<evidence type="ECO:0000255" key="1">
    <source>
        <dbReference type="HAMAP-Rule" id="MF_01322"/>
    </source>
</evidence>
<evidence type="ECO:0000256" key="2">
    <source>
        <dbReference type="SAM" id="MobiDB-lite"/>
    </source>
</evidence>
<organism>
    <name type="scientific">Leptospira biflexa serovar Patoc (strain Patoc 1 / ATCC 23582 / Paris)</name>
    <dbReference type="NCBI Taxonomy" id="456481"/>
    <lineage>
        <taxon>Bacteria</taxon>
        <taxon>Pseudomonadati</taxon>
        <taxon>Spirochaetota</taxon>
        <taxon>Spirochaetia</taxon>
        <taxon>Leptospirales</taxon>
        <taxon>Leptospiraceae</taxon>
        <taxon>Leptospira</taxon>
    </lineage>
</organism>
<name>RPOC_LEPBP</name>
<dbReference type="EC" id="2.7.7.6" evidence="1"/>
<dbReference type="EMBL" id="CP000786">
    <property type="protein sequence ID" value="ABZ98073.1"/>
    <property type="molecule type" value="Genomic_DNA"/>
</dbReference>
<dbReference type="RefSeq" id="WP_012388944.1">
    <property type="nucleotide sequence ID" value="NC_010602.1"/>
</dbReference>
<dbReference type="SMR" id="B0SSI3"/>
<dbReference type="STRING" id="456481.LEPBI_I1971"/>
<dbReference type="KEGG" id="lbi:LEPBI_I1971"/>
<dbReference type="HOGENOM" id="CLU_000524_3_1_12"/>
<dbReference type="OrthoDB" id="9815296at2"/>
<dbReference type="BioCyc" id="LBIF456481:LEPBI_RS09735-MONOMER"/>
<dbReference type="Proteomes" id="UP000001847">
    <property type="component" value="Chromosome I"/>
</dbReference>
<dbReference type="GO" id="GO:0000428">
    <property type="term" value="C:DNA-directed RNA polymerase complex"/>
    <property type="evidence" value="ECO:0007669"/>
    <property type="project" value="UniProtKB-KW"/>
</dbReference>
<dbReference type="GO" id="GO:0003677">
    <property type="term" value="F:DNA binding"/>
    <property type="evidence" value="ECO:0007669"/>
    <property type="project" value="UniProtKB-UniRule"/>
</dbReference>
<dbReference type="GO" id="GO:0003899">
    <property type="term" value="F:DNA-directed RNA polymerase activity"/>
    <property type="evidence" value="ECO:0007669"/>
    <property type="project" value="UniProtKB-UniRule"/>
</dbReference>
<dbReference type="GO" id="GO:0000287">
    <property type="term" value="F:magnesium ion binding"/>
    <property type="evidence" value="ECO:0007669"/>
    <property type="project" value="UniProtKB-UniRule"/>
</dbReference>
<dbReference type="GO" id="GO:0008270">
    <property type="term" value="F:zinc ion binding"/>
    <property type="evidence" value="ECO:0007669"/>
    <property type="project" value="UniProtKB-UniRule"/>
</dbReference>
<dbReference type="GO" id="GO:0006351">
    <property type="term" value="P:DNA-templated transcription"/>
    <property type="evidence" value="ECO:0007669"/>
    <property type="project" value="UniProtKB-UniRule"/>
</dbReference>
<dbReference type="CDD" id="cd02655">
    <property type="entry name" value="RNAP_beta'_C"/>
    <property type="match status" value="1"/>
</dbReference>
<dbReference type="CDD" id="cd01609">
    <property type="entry name" value="RNAP_beta'_N"/>
    <property type="match status" value="1"/>
</dbReference>
<dbReference type="FunFam" id="4.10.860.120:FF:000001">
    <property type="entry name" value="DNA-directed RNA polymerase subunit beta"/>
    <property type="match status" value="1"/>
</dbReference>
<dbReference type="Gene3D" id="1.10.132.30">
    <property type="match status" value="1"/>
</dbReference>
<dbReference type="Gene3D" id="1.10.150.390">
    <property type="match status" value="1"/>
</dbReference>
<dbReference type="Gene3D" id="1.10.1790.20">
    <property type="match status" value="1"/>
</dbReference>
<dbReference type="Gene3D" id="1.10.40.90">
    <property type="match status" value="1"/>
</dbReference>
<dbReference type="Gene3D" id="2.40.40.20">
    <property type="match status" value="1"/>
</dbReference>
<dbReference type="Gene3D" id="2.40.50.100">
    <property type="match status" value="2"/>
</dbReference>
<dbReference type="Gene3D" id="4.10.860.120">
    <property type="entry name" value="RNA polymerase II, clamp domain"/>
    <property type="match status" value="1"/>
</dbReference>
<dbReference type="Gene3D" id="1.10.274.100">
    <property type="entry name" value="RNA polymerase Rpb1, domain 3"/>
    <property type="match status" value="1"/>
</dbReference>
<dbReference type="HAMAP" id="MF_01322">
    <property type="entry name" value="RNApol_bact_RpoC"/>
    <property type="match status" value="1"/>
</dbReference>
<dbReference type="InterPro" id="IPR045867">
    <property type="entry name" value="DNA-dir_RpoC_beta_prime"/>
</dbReference>
<dbReference type="InterPro" id="IPR012754">
    <property type="entry name" value="DNA-dir_RpoC_beta_prime_bact"/>
</dbReference>
<dbReference type="InterPro" id="IPR000722">
    <property type="entry name" value="RNA_pol_asu"/>
</dbReference>
<dbReference type="InterPro" id="IPR006592">
    <property type="entry name" value="RNA_pol_N"/>
</dbReference>
<dbReference type="InterPro" id="IPR007080">
    <property type="entry name" value="RNA_pol_Rpb1_1"/>
</dbReference>
<dbReference type="InterPro" id="IPR007066">
    <property type="entry name" value="RNA_pol_Rpb1_3"/>
</dbReference>
<dbReference type="InterPro" id="IPR042102">
    <property type="entry name" value="RNA_pol_Rpb1_3_sf"/>
</dbReference>
<dbReference type="InterPro" id="IPR007083">
    <property type="entry name" value="RNA_pol_Rpb1_4"/>
</dbReference>
<dbReference type="InterPro" id="IPR007081">
    <property type="entry name" value="RNA_pol_Rpb1_5"/>
</dbReference>
<dbReference type="InterPro" id="IPR044893">
    <property type="entry name" value="RNA_pol_Rpb1_clamp_domain"/>
</dbReference>
<dbReference type="InterPro" id="IPR038120">
    <property type="entry name" value="Rpb1_funnel_sf"/>
</dbReference>
<dbReference type="NCBIfam" id="TIGR02386">
    <property type="entry name" value="rpoC_TIGR"/>
    <property type="match status" value="1"/>
</dbReference>
<dbReference type="PANTHER" id="PTHR19376">
    <property type="entry name" value="DNA-DIRECTED RNA POLYMERASE"/>
    <property type="match status" value="1"/>
</dbReference>
<dbReference type="PANTHER" id="PTHR19376:SF54">
    <property type="entry name" value="DNA-DIRECTED RNA POLYMERASE SUBUNIT BETA"/>
    <property type="match status" value="1"/>
</dbReference>
<dbReference type="Pfam" id="PF04997">
    <property type="entry name" value="RNA_pol_Rpb1_1"/>
    <property type="match status" value="1"/>
</dbReference>
<dbReference type="Pfam" id="PF00623">
    <property type="entry name" value="RNA_pol_Rpb1_2"/>
    <property type="match status" value="1"/>
</dbReference>
<dbReference type="Pfam" id="PF04983">
    <property type="entry name" value="RNA_pol_Rpb1_3"/>
    <property type="match status" value="1"/>
</dbReference>
<dbReference type="Pfam" id="PF05000">
    <property type="entry name" value="RNA_pol_Rpb1_4"/>
    <property type="match status" value="1"/>
</dbReference>
<dbReference type="Pfam" id="PF04998">
    <property type="entry name" value="RNA_pol_Rpb1_5"/>
    <property type="match status" value="1"/>
</dbReference>
<dbReference type="SMART" id="SM00663">
    <property type="entry name" value="RPOLA_N"/>
    <property type="match status" value="1"/>
</dbReference>
<dbReference type="SUPFAM" id="SSF64484">
    <property type="entry name" value="beta and beta-prime subunits of DNA dependent RNA-polymerase"/>
    <property type="match status" value="1"/>
</dbReference>